<sequence length="109" mass="12078">MEVKAIVKDTGYSALKVRLCVDMVRGKKVSEAITMLRFMTSPTAKVVSKVIKSAAANAENNFQMNPADLKISQIYADEARMLKRMRPQARGRVSPILKRSSHITVVVAD</sequence>
<gene>
    <name evidence="1" type="primary">rplV</name>
    <name type="ordered locus">DET0479</name>
</gene>
<proteinExistence type="inferred from homology"/>
<keyword id="KW-0687">Ribonucleoprotein</keyword>
<keyword id="KW-0689">Ribosomal protein</keyword>
<keyword id="KW-0694">RNA-binding</keyword>
<keyword id="KW-0699">rRNA-binding</keyword>
<dbReference type="EMBL" id="CP000027">
    <property type="protein sequence ID" value="AAW40186.1"/>
    <property type="molecule type" value="Genomic_DNA"/>
</dbReference>
<dbReference type="RefSeq" id="WP_010936256.1">
    <property type="nucleotide sequence ID" value="NC_002936.3"/>
</dbReference>
<dbReference type="SMR" id="Q3Z976"/>
<dbReference type="FunCoup" id="Q3Z976">
    <property type="interactions" value="362"/>
</dbReference>
<dbReference type="STRING" id="243164.DET0479"/>
<dbReference type="GeneID" id="3230150"/>
<dbReference type="KEGG" id="det:DET0479"/>
<dbReference type="eggNOG" id="COG0091">
    <property type="taxonomic scope" value="Bacteria"/>
</dbReference>
<dbReference type="HOGENOM" id="CLU_083987_3_3_0"/>
<dbReference type="InParanoid" id="Q3Z976"/>
<dbReference type="Proteomes" id="UP000008289">
    <property type="component" value="Chromosome"/>
</dbReference>
<dbReference type="GO" id="GO:0022625">
    <property type="term" value="C:cytosolic large ribosomal subunit"/>
    <property type="evidence" value="ECO:0007669"/>
    <property type="project" value="TreeGrafter"/>
</dbReference>
<dbReference type="GO" id="GO:0019843">
    <property type="term" value="F:rRNA binding"/>
    <property type="evidence" value="ECO:0007669"/>
    <property type="project" value="UniProtKB-UniRule"/>
</dbReference>
<dbReference type="GO" id="GO:0003735">
    <property type="term" value="F:structural constituent of ribosome"/>
    <property type="evidence" value="ECO:0007669"/>
    <property type="project" value="InterPro"/>
</dbReference>
<dbReference type="GO" id="GO:0006412">
    <property type="term" value="P:translation"/>
    <property type="evidence" value="ECO:0007669"/>
    <property type="project" value="UniProtKB-UniRule"/>
</dbReference>
<dbReference type="CDD" id="cd00336">
    <property type="entry name" value="Ribosomal_L22"/>
    <property type="match status" value="1"/>
</dbReference>
<dbReference type="Gene3D" id="3.90.470.10">
    <property type="entry name" value="Ribosomal protein L22/L17"/>
    <property type="match status" value="1"/>
</dbReference>
<dbReference type="HAMAP" id="MF_01331_B">
    <property type="entry name" value="Ribosomal_uL22_B"/>
    <property type="match status" value="1"/>
</dbReference>
<dbReference type="InterPro" id="IPR001063">
    <property type="entry name" value="Ribosomal_uL22"/>
</dbReference>
<dbReference type="InterPro" id="IPR005727">
    <property type="entry name" value="Ribosomal_uL22_bac/chlpt-type"/>
</dbReference>
<dbReference type="InterPro" id="IPR047867">
    <property type="entry name" value="Ribosomal_uL22_bac/org-type"/>
</dbReference>
<dbReference type="InterPro" id="IPR036394">
    <property type="entry name" value="Ribosomal_uL22_sf"/>
</dbReference>
<dbReference type="NCBIfam" id="TIGR01044">
    <property type="entry name" value="rplV_bact"/>
    <property type="match status" value="1"/>
</dbReference>
<dbReference type="PANTHER" id="PTHR13501">
    <property type="entry name" value="CHLOROPLAST 50S RIBOSOMAL PROTEIN L22-RELATED"/>
    <property type="match status" value="1"/>
</dbReference>
<dbReference type="PANTHER" id="PTHR13501:SF8">
    <property type="entry name" value="LARGE RIBOSOMAL SUBUNIT PROTEIN UL22M"/>
    <property type="match status" value="1"/>
</dbReference>
<dbReference type="Pfam" id="PF00237">
    <property type="entry name" value="Ribosomal_L22"/>
    <property type="match status" value="1"/>
</dbReference>
<dbReference type="SUPFAM" id="SSF54843">
    <property type="entry name" value="Ribosomal protein L22"/>
    <property type="match status" value="1"/>
</dbReference>
<organism>
    <name type="scientific">Dehalococcoides mccartyi (strain ATCC BAA-2266 / KCTC 15142 / 195)</name>
    <name type="common">Dehalococcoides ethenogenes (strain 195)</name>
    <dbReference type="NCBI Taxonomy" id="243164"/>
    <lineage>
        <taxon>Bacteria</taxon>
        <taxon>Bacillati</taxon>
        <taxon>Chloroflexota</taxon>
        <taxon>Dehalococcoidia</taxon>
        <taxon>Dehalococcoidales</taxon>
        <taxon>Dehalococcoidaceae</taxon>
        <taxon>Dehalococcoides</taxon>
    </lineage>
</organism>
<comment type="function">
    <text evidence="1">This protein binds specifically to 23S rRNA; its binding is stimulated by other ribosomal proteins, e.g. L4, L17, and L20. It is important during the early stages of 50S assembly. It makes multiple contacts with different domains of the 23S rRNA in the assembled 50S subunit and ribosome (By similarity).</text>
</comment>
<comment type="function">
    <text evidence="1">The globular domain of the protein is located near the polypeptide exit tunnel on the outside of the subunit, while an extended beta-hairpin is found that lines the wall of the exit tunnel in the center of the 70S ribosome.</text>
</comment>
<comment type="subunit">
    <text evidence="1">Part of the 50S ribosomal subunit.</text>
</comment>
<comment type="similarity">
    <text evidence="1">Belongs to the universal ribosomal protein uL22 family.</text>
</comment>
<reference key="1">
    <citation type="journal article" date="2005" name="Science">
        <title>Genome sequence of the PCE-dechlorinating bacterium Dehalococcoides ethenogenes.</title>
        <authorList>
            <person name="Seshadri R."/>
            <person name="Adrian L."/>
            <person name="Fouts D.E."/>
            <person name="Eisen J.A."/>
            <person name="Phillippy A.M."/>
            <person name="Methe B.A."/>
            <person name="Ward N.L."/>
            <person name="Nelson W.C."/>
            <person name="DeBoy R.T."/>
            <person name="Khouri H.M."/>
            <person name="Kolonay J.F."/>
            <person name="Dodson R.J."/>
            <person name="Daugherty S.C."/>
            <person name="Brinkac L.M."/>
            <person name="Sullivan S.A."/>
            <person name="Madupu R."/>
            <person name="Nelson K.E."/>
            <person name="Kang K.H."/>
            <person name="Impraim M."/>
            <person name="Tran K."/>
            <person name="Robinson J.M."/>
            <person name="Forberger H.A."/>
            <person name="Fraser C.M."/>
            <person name="Zinder S.H."/>
            <person name="Heidelberg J.F."/>
        </authorList>
    </citation>
    <scope>NUCLEOTIDE SEQUENCE [LARGE SCALE GENOMIC DNA]</scope>
    <source>
        <strain>ATCC BAA-2266 / KCTC 15142 / 195</strain>
    </source>
</reference>
<protein>
    <recommendedName>
        <fullName evidence="1">Large ribosomal subunit protein uL22</fullName>
    </recommendedName>
    <alternativeName>
        <fullName evidence="2">50S ribosomal protein L22</fullName>
    </alternativeName>
</protein>
<name>RL22_DEHM1</name>
<feature type="chain" id="PRO_0000243144" description="Large ribosomal subunit protein uL22">
    <location>
        <begin position="1"/>
        <end position="109"/>
    </location>
</feature>
<accession>Q3Z976</accession>
<evidence type="ECO:0000255" key="1">
    <source>
        <dbReference type="HAMAP-Rule" id="MF_01331"/>
    </source>
</evidence>
<evidence type="ECO:0000305" key="2"/>